<proteinExistence type="inferred from homology"/>
<organism>
    <name type="scientific">Hahella chejuensis (strain KCTC 2396)</name>
    <dbReference type="NCBI Taxonomy" id="349521"/>
    <lineage>
        <taxon>Bacteria</taxon>
        <taxon>Pseudomonadati</taxon>
        <taxon>Pseudomonadota</taxon>
        <taxon>Gammaproteobacteria</taxon>
        <taxon>Oceanospirillales</taxon>
        <taxon>Hahellaceae</taxon>
        <taxon>Hahella</taxon>
    </lineage>
</organism>
<sequence length="158" mass="17646">MATVVGFDFGLKRFGAAVGQSVSMTASPLKEIPAQDGIPRWEAIEALLEEWKPALVIVGEPLNMDGSVSEMALRARKFARRLHGRYNLRVEMADERLTSSEAKSMVRERYGQRDFGRFAVDSIAAVFIVESWLEAHADNLDAFLHPPRKQGKSNDIID</sequence>
<gene>
    <name type="ordered locus">HCH_00551</name>
</gene>
<comment type="function">
    <text evidence="1">Could be a nuclease involved in processing of the 5'-end of pre-16S rRNA.</text>
</comment>
<comment type="subcellular location">
    <subcellularLocation>
        <location evidence="1">Cytoplasm</location>
    </subcellularLocation>
</comment>
<comment type="similarity">
    <text evidence="1">Belongs to the YqgF nuclease family.</text>
</comment>
<reference key="1">
    <citation type="journal article" date="2005" name="Nucleic Acids Res.">
        <title>Genomic blueprint of Hahella chejuensis, a marine microbe producing an algicidal agent.</title>
        <authorList>
            <person name="Jeong H."/>
            <person name="Yim J.H."/>
            <person name="Lee C."/>
            <person name="Choi S.-H."/>
            <person name="Park Y.K."/>
            <person name="Yoon S.H."/>
            <person name="Hur C.-G."/>
            <person name="Kang H.-Y."/>
            <person name="Kim D."/>
            <person name="Lee H.H."/>
            <person name="Park K.H."/>
            <person name="Park S.-H."/>
            <person name="Park H.-S."/>
            <person name="Lee H.K."/>
            <person name="Oh T.K."/>
            <person name="Kim J.F."/>
        </authorList>
    </citation>
    <scope>NUCLEOTIDE SEQUENCE [LARGE SCALE GENOMIC DNA]</scope>
    <source>
        <strain>KCTC 2396</strain>
    </source>
</reference>
<protein>
    <recommendedName>
        <fullName evidence="1">Putative pre-16S rRNA nuclease</fullName>
        <ecNumber evidence="1">3.1.-.-</ecNumber>
    </recommendedName>
</protein>
<dbReference type="EC" id="3.1.-.-" evidence="1"/>
<dbReference type="EMBL" id="CP000155">
    <property type="protein sequence ID" value="ABC27455.1"/>
    <property type="molecule type" value="Genomic_DNA"/>
</dbReference>
<dbReference type="RefSeq" id="WP_011394532.1">
    <property type="nucleotide sequence ID" value="NC_007645.1"/>
</dbReference>
<dbReference type="SMR" id="Q2SPG9"/>
<dbReference type="STRING" id="349521.HCH_00551"/>
<dbReference type="KEGG" id="hch:HCH_00551"/>
<dbReference type="eggNOG" id="COG0816">
    <property type="taxonomic scope" value="Bacteria"/>
</dbReference>
<dbReference type="HOGENOM" id="CLU_098240_3_0_6"/>
<dbReference type="OrthoDB" id="9796140at2"/>
<dbReference type="Proteomes" id="UP000000238">
    <property type="component" value="Chromosome"/>
</dbReference>
<dbReference type="GO" id="GO:0005829">
    <property type="term" value="C:cytosol"/>
    <property type="evidence" value="ECO:0007669"/>
    <property type="project" value="TreeGrafter"/>
</dbReference>
<dbReference type="GO" id="GO:0004518">
    <property type="term" value="F:nuclease activity"/>
    <property type="evidence" value="ECO:0007669"/>
    <property type="project" value="UniProtKB-KW"/>
</dbReference>
<dbReference type="GO" id="GO:0000967">
    <property type="term" value="P:rRNA 5'-end processing"/>
    <property type="evidence" value="ECO:0007669"/>
    <property type="project" value="UniProtKB-UniRule"/>
</dbReference>
<dbReference type="CDD" id="cd16964">
    <property type="entry name" value="YqgF"/>
    <property type="match status" value="1"/>
</dbReference>
<dbReference type="Gene3D" id="3.30.420.140">
    <property type="entry name" value="YqgF/RNase H-like domain"/>
    <property type="match status" value="1"/>
</dbReference>
<dbReference type="HAMAP" id="MF_00651">
    <property type="entry name" value="Nuclease_YqgF"/>
    <property type="match status" value="1"/>
</dbReference>
<dbReference type="InterPro" id="IPR012337">
    <property type="entry name" value="RNaseH-like_sf"/>
</dbReference>
<dbReference type="InterPro" id="IPR005227">
    <property type="entry name" value="YqgF"/>
</dbReference>
<dbReference type="InterPro" id="IPR006641">
    <property type="entry name" value="YqgF/RNaseH-like_dom"/>
</dbReference>
<dbReference type="InterPro" id="IPR037027">
    <property type="entry name" value="YqgF/RNaseH-like_dom_sf"/>
</dbReference>
<dbReference type="NCBIfam" id="TIGR00250">
    <property type="entry name" value="RNAse_H_YqgF"/>
    <property type="match status" value="1"/>
</dbReference>
<dbReference type="PANTHER" id="PTHR33317">
    <property type="entry name" value="POLYNUCLEOTIDYL TRANSFERASE, RIBONUCLEASE H-LIKE SUPERFAMILY PROTEIN"/>
    <property type="match status" value="1"/>
</dbReference>
<dbReference type="PANTHER" id="PTHR33317:SF4">
    <property type="entry name" value="POLYNUCLEOTIDYL TRANSFERASE, RIBONUCLEASE H-LIKE SUPERFAMILY PROTEIN"/>
    <property type="match status" value="1"/>
</dbReference>
<dbReference type="Pfam" id="PF03652">
    <property type="entry name" value="RuvX"/>
    <property type="match status" value="1"/>
</dbReference>
<dbReference type="SMART" id="SM00732">
    <property type="entry name" value="YqgFc"/>
    <property type="match status" value="1"/>
</dbReference>
<dbReference type="SUPFAM" id="SSF53098">
    <property type="entry name" value="Ribonuclease H-like"/>
    <property type="match status" value="1"/>
</dbReference>
<evidence type="ECO:0000255" key="1">
    <source>
        <dbReference type="HAMAP-Rule" id="MF_00651"/>
    </source>
</evidence>
<accession>Q2SPG9</accession>
<name>YQGF_HAHCH</name>
<feature type="chain" id="PRO_0000257539" description="Putative pre-16S rRNA nuclease">
    <location>
        <begin position="1"/>
        <end position="158"/>
    </location>
</feature>
<keyword id="KW-0963">Cytoplasm</keyword>
<keyword id="KW-0378">Hydrolase</keyword>
<keyword id="KW-0540">Nuclease</keyword>
<keyword id="KW-1185">Reference proteome</keyword>
<keyword id="KW-0690">Ribosome biogenesis</keyword>